<dbReference type="EC" id="2.8.4.4" evidence="1"/>
<dbReference type="EMBL" id="AE017226">
    <property type="protein sequence ID" value="AAS13126.1"/>
    <property type="molecule type" value="Genomic_DNA"/>
</dbReference>
<dbReference type="RefSeq" id="NP_973207.1">
    <property type="nucleotide sequence ID" value="NC_002967.9"/>
</dbReference>
<dbReference type="RefSeq" id="WP_002680609.1">
    <property type="nucleotide sequence ID" value="NC_002967.9"/>
</dbReference>
<dbReference type="SMR" id="Q73JG6"/>
<dbReference type="STRING" id="243275.TDE_2609"/>
<dbReference type="PaxDb" id="243275-TDE_2609"/>
<dbReference type="GeneID" id="2740783"/>
<dbReference type="KEGG" id="tde:TDE_2609"/>
<dbReference type="PATRIC" id="fig|243275.7.peg.2467"/>
<dbReference type="eggNOG" id="COG0621">
    <property type="taxonomic scope" value="Bacteria"/>
</dbReference>
<dbReference type="HOGENOM" id="CLU_018697_0_1_12"/>
<dbReference type="OrthoDB" id="9805215at2"/>
<dbReference type="Proteomes" id="UP000008212">
    <property type="component" value="Chromosome"/>
</dbReference>
<dbReference type="GO" id="GO:0005829">
    <property type="term" value="C:cytosol"/>
    <property type="evidence" value="ECO:0007669"/>
    <property type="project" value="TreeGrafter"/>
</dbReference>
<dbReference type="GO" id="GO:0051539">
    <property type="term" value="F:4 iron, 4 sulfur cluster binding"/>
    <property type="evidence" value="ECO:0007669"/>
    <property type="project" value="UniProtKB-UniRule"/>
</dbReference>
<dbReference type="GO" id="GO:0035599">
    <property type="term" value="F:aspartic acid methylthiotransferase activity"/>
    <property type="evidence" value="ECO:0007669"/>
    <property type="project" value="TreeGrafter"/>
</dbReference>
<dbReference type="GO" id="GO:0046872">
    <property type="term" value="F:metal ion binding"/>
    <property type="evidence" value="ECO:0007669"/>
    <property type="project" value="UniProtKB-KW"/>
</dbReference>
<dbReference type="GO" id="GO:0103039">
    <property type="term" value="F:protein methylthiotransferase activity"/>
    <property type="evidence" value="ECO:0007669"/>
    <property type="project" value="UniProtKB-EC"/>
</dbReference>
<dbReference type="GO" id="GO:0006400">
    <property type="term" value="P:tRNA modification"/>
    <property type="evidence" value="ECO:0007669"/>
    <property type="project" value="InterPro"/>
</dbReference>
<dbReference type="CDD" id="cd01335">
    <property type="entry name" value="Radical_SAM"/>
    <property type="match status" value="1"/>
</dbReference>
<dbReference type="Gene3D" id="3.40.50.12160">
    <property type="entry name" value="Methylthiotransferase, N-terminal domain"/>
    <property type="match status" value="1"/>
</dbReference>
<dbReference type="Gene3D" id="2.40.50.140">
    <property type="entry name" value="Nucleic acid-binding proteins"/>
    <property type="match status" value="1"/>
</dbReference>
<dbReference type="Gene3D" id="3.80.30.20">
    <property type="entry name" value="tm_1862 like domain"/>
    <property type="match status" value="1"/>
</dbReference>
<dbReference type="HAMAP" id="MF_01865">
    <property type="entry name" value="MTTase_RimO"/>
    <property type="match status" value="1"/>
</dbReference>
<dbReference type="InterPro" id="IPR006638">
    <property type="entry name" value="Elp3/MiaA/NifB-like_rSAM"/>
</dbReference>
<dbReference type="InterPro" id="IPR005839">
    <property type="entry name" value="Methylthiotransferase"/>
</dbReference>
<dbReference type="InterPro" id="IPR020612">
    <property type="entry name" value="Methylthiotransferase_CS"/>
</dbReference>
<dbReference type="InterPro" id="IPR013848">
    <property type="entry name" value="Methylthiotransferase_N"/>
</dbReference>
<dbReference type="InterPro" id="IPR038135">
    <property type="entry name" value="Methylthiotransferase_N_sf"/>
</dbReference>
<dbReference type="InterPro" id="IPR012340">
    <property type="entry name" value="NA-bd_OB-fold"/>
</dbReference>
<dbReference type="InterPro" id="IPR005840">
    <property type="entry name" value="Ribosomal_uS12_MeSTrfase_RimO"/>
</dbReference>
<dbReference type="InterPro" id="IPR007197">
    <property type="entry name" value="rSAM"/>
</dbReference>
<dbReference type="InterPro" id="IPR023404">
    <property type="entry name" value="rSAM_horseshoe"/>
</dbReference>
<dbReference type="InterPro" id="IPR002792">
    <property type="entry name" value="TRAM_dom"/>
</dbReference>
<dbReference type="NCBIfam" id="TIGR01125">
    <property type="entry name" value="30S ribosomal protein S12 methylthiotransferase RimO"/>
    <property type="match status" value="1"/>
</dbReference>
<dbReference type="NCBIfam" id="TIGR00089">
    <property type="entry name" value="MiaB/RimO family radical SAM methylthiotransferase"/>
    <property type="match status" value="1"/>
</dbReference>
<dbReference type="PANTHER" id="PTHR43837">
    <property type="entry name" value="RIBOSOMAL PROTEIN S12 METHYLTHIOTRANSFERASE RIMO"/>
    <property type="match status" value="1"/>
</dbReference>
<dbReference type="PANTHER" id="PTHR43837:SF1">
    <property type="entry name" value="RIBOSOMAL PROTEIN US12 METHYLTHIOTRANSFERASE RIMO"/>
    <property type="match status" value="1"/>
</dbReference>
<dbReference type="Pfam" id="PF04055">
    <property type="entry name" value="Radical_SAM"/>
    <property type="match status" value="1"/>
</dbReference>
<dbReference type="Pfam" id="PF18693">
    <property type="entry name" value="TRAM_2"/>
    <property type="match status" value="1"/>
</dbReference>
<dbReference type="Pfam" id="PF00919">
    <property type="entry name" value="UPF0004"/>
    <property type="match status" value="1"/>
</dbReference>
<dbReference type="SFLD" id="SFLDG01082">
    <property type="entry name" value="B12-binding_domain_containing"/>
    <property type="match status" value="1"/>
</dbReference>
<dbReference type="SFLD" id="SFLDG01061">
    <property type="entry name" value="methylthiotransferase"/>
    <property type="match status" value="1"/>
</dbReference>
<dbReference type="SFLD" id="SFLDS00029">
    <property type="entry name" value="Radical_SAM"/>
    <property type="match status" value="1"/>
</dbReference>
<dbReference type="SMART" id="SM00729">
    <property type="entry name" value="Elp3"/>
    <property type="match status" value="1"/>
</dbReference>
<dbReference type="SUPFAM" id="SSF102114">
    <property type="entry name" value="Radical SAM enzymes"/>
    <property type="match status" value="1"/>
</dbReference>
<dbReference type="PROSITE" id="PS51449">
    <property type="entry name" value="MTTASE_N"/>
    <property type="match status" value="1"/>
</dbReference>
<dbReference type="PROSITE" id="PS01278">
    <property type="entry name" value="MTTASE_RADICAL"/>
    <property type="match status" value="1"/>
</dbReference>
<dbReference type="PROSITE" id="PS51918">
    <property type="entry name" value="RADICAL_SAM"/>
    <property type="match status" value="1"/>
</dbReference>
<proteinExistence type="inferred from homology"/>
<protein>
    <recommendedName>
        <fullName evidence="1">Ribosomal protein uS12 methylthiotransferase RimO</fullName>
        <shortName evidence="1">uS12 MTTase</shortName>
        <shortName evidence="1">uS12 methylthiotransferase</shortName>
        <ecNumber evidence="1">2.8.4.4</ecNumber>
    </recommendedName>
    <alternativeName>
        <fullName evidence="1">Ribosomal protein uS12 (aspartate-C(3))-methylthiotransferase</fullName>
    </alternativeName>
    <alternativeName>
        <fullName evidence="1">Ribosome maturation factor RimO</fullName>
    </alternativeName>
</protein>
<keyword id="KW-0004">4Fe-4S</keyword>
<keyword id="KW-0963">Cytoplasm</keyword>
<keyword id="KW-0408">Iron</keyword>
<keyword id="KW-0411">Iron-sulfur</keyword>
<keyword id="KW-0479">Metal-binding</keyword>
<keyword id="KW-1185">Reference proteome</keyword>
<keyword id="KW-0949">S-adenosyl-L-methionine</keyword>
<keyword id="KW-0808">Transferase</keyword>
<sequence>MDLHGCAKNQVDAELIIGIMENLSWKNTSDPDEADLIIVNSCGFINSAKEESINAVLQAKAAHPKAKVLLAGCLAERYADILKNDLPEADGIFGNGNLSLLPQLIDSMFPKKTSDEKFIEKTLVPPQIGICGGERPKILNFPRSTYIKITEGCDNFCSFCAIPIIRGRLRSRPIKDICDEIKTFLKKSFYEFNLIGQDLAAYQTGKDDLSEDELHRENCSGLALLLKSISKIKGNFKIRLLYIHPDHFPLDILPIMTADKRFLPYFDIPFQSGAQKIIRAMNRNGAAEVYLDIIKNIREAFEKTNSPYGEPQIRTTFLVGFPGETDEDFNETIKFLKELRPLWSGGFTYSREEDTPSYSFKGKVPKKTAEARLAEIQNAQTSITEKKLDSFIGKEIEVLVEELIQAEDKTFLALGRAWFQAPEVDGAVVLNFNLNKKDIDGNPIAPGSIVKARIAARNGFDLEAVAV</sequence>
<feature type="chain" id="PRO_0000375059" description="Ribosomal protein uS12 methylthiotransferase RimO">
    <location>
        <begin position="1"/>
        <end position="467"/>
    </location>
</feature>
<feature type="domain" description="MTTase N-terminal" evidence="1">
    <location>
        <begin position="1"/>
        <end position="110"/>
    </location>
</feature>
<feature type="domain" description="Radical SAM core" evidence="2">
    <location>
        <begin position="139"/>
        <end position="386"/>
    </location>
</feature>
<feature type="domain" description="TRAM" evidence="1">
    <location>
        <begin position="389"/>
        <end position="467"/>
    </location>
</feature>
<feature type="binding site" evidence="1">
    <location>
        <position position="6"/>
    </location>
    <ligand>
        <name>[4Fe-4S] cluster</name>
        <dbReference type="ChEBI" id="CHEBI:49883"/>
        <label>1</label>
    </ligand>
</feature>
<feature type="binding site" evidence="1">
    <location>
        <position position="42"/>
    </location>
    <ligand>
        <name>[4Fe-4S] cluster</name>
        <dbReference type="ChEBI" id="CHEBI:49883"/>
        <label>1</label>
    </ligand>
</feature>
<feature type="binding site" evidence="1">
    <location>
        <position position="73"/>
    </location>
    <ligand>
        <name>[4Fe-4S] cluster</name>
        <dbReference type="ChEBI" id="CHEBI:49883"/>
        <label>1</label>
    </ligand>
</feature>
<feature type="binding site" evidence="1">
    <location>
        <position position="153"/>
    </location>
    <ligand>
        <name>[4Fe-4S] cluster</name>
        <dbReference type="ChEBI" id="CHEBI:49883"/>
        <label>2</label>
        <note>4Fe-4S-S-AdoMet</note>
    </ligand>
</feature>
<feature type="binding site" evidence="1">
    <location>
        <position position="157"/>
    </location>
    <ligand>
        <name>[4Fe-4S] cluster</name>
        <dbReference type="ChEBI" id="CHEBI:49883"/>
        <label>2</label>
        <note>4Fe-4S-S-AdoMet</note>
    </ligand>
</feature>
<feature type="binding site" evidence="1">
    <location>
        <position position="160"/>
    </location>
    <ligand>
        <name>[4Fe-4S] cluster</name>
        <dbReference type="ChEBI" id="CHEBI:49883"/>
        <label>2</label>
        <note>4Fe-4S-S-AdoMet</note>
    </ligand>
</feature>
<accession>Q73JG6</accession>
<organism>
    <name type="scientific">Treponema denticola (strain ATCC 35405 / DSM 14222 / CIP 103919 / JCM 8153 / KCTC 15104)</name>
    <dbReference type="NCBI Taxonomy" id="243275"/>
    <lineage>
        <taxon>Bacteria</taxon>
        <taxon>Pseudomonadati</taxon>
        <taxon>Spirochaetota</taxon>
        <taxon>Spirochaetia</taxon>
        <taxon>Spirochaetales</taxon>
        <taxon>Treponemataceae</taxon>
        <taxon>Treponema</taxon>
    </lineage>
</organism>
<name>RIMO_TREDE</name>
<gene>
    <name evidence="1" type="primary">rimO</name>
    <name type="ordered locus">TDE_2609</name>
</gene>
<comment type="function">
    <text evidence="1">Catalyzes the methylthiolation of an aspartic acid residue of ribosomal protein uS12.</text>
</comment>
<comment type="catalytic activity">
    <reaction evidence="1">
        <text>L-aspartate(89)-[ribosomal protein uS12]-hydrogen + (sulfur carrier)-SH + AH2 + 2 S-adenosyl-L-methionine = 3-methylsulfanyl-L-aspartate(89)-[ribosomal protein uS12]-hydrogen + (sulfur carrier)-H + 5'-deoxyadenosine + L-methionine + A + S-adenosyl-L-homocysteine + 2 H(+)</text>
        <dbReference type="Rhea" id="RHEA:37087"/>
        <dbReference type="Rhea" id="RHEA-COMP:10460"/>
        <dbReference type="Rhea" id="RHEA-COMP:10461"/>
        <dbReference type="Rhea" id="RHEA-COMP:14737"/>
        <dbReference type="Rhea" id="RHEA-COMP:14739"/>
        <dbReference type="ChEBI" id="CHEBI:13193"/>
        <dbReference type="ChEBI" id="CHEBI:15378"/>
        <dbReference type="ChEBI" id="CHEBI:17319"/>
        <dbReference type="ChEBI" id="CHEBI:17499"/>
        <dbReference type="ChEBI" id="CHEBI:29917"/>
        <dbReference type="ChEBI" id="CHEBI:29961"/>
        <dbReference type="ChEBI" id="CHEBI:57844"/>
        <dbReference type="ChEBI" id="CHEBI:57856"/>
        <dbReference type="ChEBI" id="CHEBI:59789"/>
        <dbReference type="ChEBI" id="CHEBI:64428"/>
        <dbReference type="ChEBI" id="CHEBI:73599"/>
        <dbReference type="EC" id="2.8.4.4"/>
    </reaction>
</comment>
<comment type="cofactor">
    <cofactor evidence="1">
        <name>[4Fe-4S] cluster</name>
        <dbReference type="ChEBI" id="CHEBI:49883"/>
    </cofactor>
    <text evidence="1">Binds 2 [4Fe-4S] clusters. One cluster is coordinated with 3 cysteines and an exchangeable S-adenosyl-L-methionine.</text>
</comment>
<comment type="subcellular location">
    <subcellularLocation>
        <location evidence="1">Cytoplasm</location>
    </subcellularLocation>
</comment>
<comment type="similarity">
    <text evidence="1">Belongs to the methylthiotransferase family. RimO subfamily.</text>
</comment>
<reference key="1">
    <citation type="journal article" date="2004" name="Proc. Natl. Acad. Sci. U.S.A.">
        <title>Comparison of the genome of the oral pathogen Treponema denticola with other spirochete genomes.</title>
        <authorList>
            <person name="Seshadri R."/>
            <person name="Myers G.S.A."/>
            <person name="Tettelin H."/>
            <person name="Eisen J.A."/>
            <person name="Heidelberg J.F."/>
            <person name="Dodson R.J."/>
            <person name="Davidsen T.M."/>
            <person name="DeBoy R.T."/>
            <person name="Fouts D.E."/>
            <person name="Haft D.H."/>
            <person name="Selengut J."/>
            <person name="Ren Q."/>
            <person name="Brinkac L.M."/>
            <person name="Madupu R."/>
            <person name="Kolonay J.F."/>
            <person name="Durkin S.A."/>
            <person name="Daugherty S.C."/>
            <person name="Shetty J."/>
            <person name="Shvartsbeyn A."/>
            <person name="Gebregeorgis E."/>
            <person name="Geer K."/>
            <person name="Tsegaye G."/>
            <person name="Malek J.A."/>
            <person name="Ayodeji B."/>
            <person name="Shatsman S."/>
            <person name="McLeod M.P."/>
            <person name="Smajs D."/>
            <person name="Howell J.K."/>
            <person name="Pal S."/>
            <person name="Amin A."/>
            <person name="Vashisth P."/>
            <person name="McNeill T.Z."/>
            <person name="Xiang Q."/>
            <person name="Sodergren E."/>
            <person name="Baca E."/>
            <person name="Weinstock G.M."/>
            <person name="Norris S.J."/>
            <person name="Fraser C.M."/>
            <person name="Paulsen I.T."/>
        </authorList>
    </citation>
    <scope>NUCLEOTIDE SEQUENCE [LARGE SCALE GENOMIC DNA]</scope>
    <source>
        <strain>ATCC 35405 / DSM 14222 / CIP 103919 / JCM 8153 / KCTC 15104</strain>
    </source>
</reference>
<evidence type="ECO:0000255" key="1">
    <source>
        <dbReference type="HAMAP-Rule" id="MF_01865"/>
    </source>
</evidence>
<evidence type="ECO:0000255" key="2">
    <source>
        <dbReference type="PROSITE-ProRule" id="PRU01266"/>
    </source>
</evidence>